<reference key="1">
    <citation type="journal article" date="2007" name="Genes Dev.">
        <title>New insights into Acinetobacter baumannii pathogenesis revealed by high-density pyrosequencing and transposon mutagenesis.</title>
        <authorList>
            <person name="Smith M.G."/>
            <person name="Gianoulis T.A."/>
            <person name="Pukatzki S."/>
            <person name="Mekalanos J.J."/>
            <person name="Ornston L.N."/>
            <person name="Gerstein M."/>
            <person name="Snyder M."/>
        </authorList>
    </citation>
    <scope>NUCLEOTIDE SEQUENCE [LARGE SCALE GENOMIC DNA]</scope>
    <source>
        <strain>ATCC 17978 / DSM 105126 / CIP 53.77 / LMG 1025 / NCDC KC755 / 5377</strain>
    </source>
</reference>
<protein>
    <recommendedName>
        <fullName evidence="1">NADH-quinone oxidoreductase subunit A</fullName>
        <ecNumber evidence="1">7.1.1.-</ecNumber>
    </recommendedName>
    <alternativeName>
        <fullName evidence="1">NADH dehydrogenase I subunit A</fullName>
    </alternativeName>
    <alternativeName>
        <fullName evidence="1">NDH-1 subunit A</fullName>
    </alternativeName>
    <alternativeName>
        <fullName evidence="1">NUO1</fullName>
    </alternativeName>
</protein>
<dbReference type="EC" id="7.1.1.-" evidence="1"/>
<dbReference type="EMBL" id="CP000521">
    <property type="protein sequence ID" value="ABO11192.1"/>
    <property type="molecule type" value="Genomic_DNA"/>
</dbReference>
<dbReference type="SMR" id="A3M2P8"/>
<dbReference type="KEGG" id="acb:A1S_0752"/>
<dbReference type="HOGENOM" id="CLU_1486001_0_0_6"/>
<dbReference type="GO" id="GO:0030964">
    <property type="term" value="C:NADH dehydrogenase complex"/>
    <property type="evidence" value="ECO:0007669"/>
    <property type="project" value="TreeGrafter"/>
</dbReference>
<dbReference type="GO" id="GO:0005886">
    <property type="term" value="C:plasma membrane"/>
    <property type="evidence" value="ECO:0007669"/>
    <property type="project" value="UniProtKB-SubCell"/>
</dbReference>
<dbReference type="GO" id="GO:0008137">
    <property type="term" value="F:NADH dehydrogenase (ubiquinone) activity"/>
    <property type="evidence" value="ECO:0007669"/>
    <property type="project" value="InterPro"/>
</dbReference>
<dbReference type="GO" id="GO:0050136">
    <property type="term" value="F:NADH:ubiquinone reductase (non-electrogenic) activity"/>
    <property type="evidence" value="ECO:0007669"/>
    <property type="project" value="UniProtKB-UniRule"/>
</dbReference>
<dbReference type="GO" id="GO:0048038">
    <property type="term" value="F:quinone binding"/>
    <property type="evidence" value="ECO:0007669"/>
    <property type="project" value="UniProtKB-KW"/>
</dbReference>
<dbReference type="Gene3D" id="1.20.58.1610">
    <property type="entry name" value="NADH:ubiquinone/plastoquinone oxidoreductase, chain 3"/>
    <property type="match status" value="1"/>
</dbReference>
<dbReference type="HAMAP" id="MF_01394">
    <property type="entry name" value="NDH1_NuoA"/>
    <property type="match status" value="1"/>
</dbReference>
<dbReference type="InterPro" id="IPR023043">
    <property type="entry name" value="NAD(P)H_OxRDtase_bac/plastid"/>
</dbReference>
<dbReference type="InterPro" id="IPR000440">
    <property type="entry name" value="NADH_UbQ/plastoQ_OxRdtase_su3"/>
</dbReference>
<dbReference type="InterPro" id="IPR038430">
    <property type="entry name" value="NDAH_ubi_oxred_su3_sf"/>
</dbReference>
<dbReference type="PANTHER" id="PTHR11058:SF21">
    <property type="entry name" value="NADH-QUINONE OXIDOREDUCTASE SUBUNIT A"/>
    <property type="match status" value="1"/>
</dbReference>
<dbReference type="PANTHER" id="PTHR11058">
    <property type="entry name" value="NADH-UBIQUINONE OXIDOREDUCTASE CHAIN 3"/>
    <property type="match status" value="1"/>
</dbReference>
<dbReference type="Pfam" id="PF00507">
    <property type="entry name" value="Oxidored_q4"/>
    <property type="match status" value="1"/>
</dbReference>
<comment type="function">
    <text evidence="1">NDH-1 shuttles electrons from NADH, via FMN and iron-sulfur (Fe-S) centers, to quinones in the respiratory chain. The immediate electron acceptor for the enzyme in this species is believed to be ubiquinone. Couples the redox reaction to proton translocation (for every two electrons transferred, four hydrogen ions are translocated across the cytoplasmic membrane), and thus conserves the redox energy in a proton gradient.</text>
</comment>
<comment type="catalytic activity">
    <reaction evidence="1">
        <text>a quinone + NADH + 5 H(+)(in) = a quinol + NAD(+) + 4 H(+)(out)</text>
        <dbReference type="Rhea" id="RHEA:57888"/>
        <dbReference type="ChEBI" id="CHEBI:15378"/>
        <dbReference type="ChEBI" id="CHEBI:24646"/>
        <dbReference type="ChEBI" id="CHEBI:57540"/>
        <dbReference type="ChEBI" id="CHEBI:57945"/>
        <dbReference type="ChEBI" id="CHEBI:132124"/>
    </reaction>
</comment>
<comment type="subunit">
    <text evidence="1">NDH-1 is composed of 14 different subunits. Subunits NuoA, H, J, K, L, M, N constitute the membrane sector of the complex.</text>
</comment>
<comment type="subcellular location">
    <subcellularLocation>
        <location evidence="1">Cell inner membrane</location>
        <topology evidence="1">Multi-pass membrane protein</topology>
    </subcellularLocation>
</comment>
<comment type="similarity">
    <text evidence="1">Belongs to the complex I subunit 3 family.</text>
</comment>
<sequence length="183" mass="19980">MSAITPYDWAIIAFVIGVTFLCVFMLTVPLLLGGKSWGRAKQEQFESGVVSAGGARIRLSAKFYLVAIFFVVFDLEALYLYAWSTSVREVGWLGYTTVVIFVVDLLIALVYAFSVGALSWAPADRRKLAGEKIKVGSPTMNIAEITRFNSIEELVTDPTGQIPAQSSGRVKSKTTPALSSEKE</sequence>
<gene>
    <name evidence="1" type="primary">nuoA</name>
    <name type="ordered locus">A1S_0752</name>
</gene>
<keyword id="KW-0997">Cell inner membrane</keyword>
<keyword id="KW-1003">Cell membrane</keyword>
<keyword id="KW-0472">Membrane</keyword>
<keyword id="KW-0520">NAD</keyword>
<keyword id="KW-0874">Quinone</keyword>
<keyword id="KW-1278">Translocase</keyword>
<keyword id="KW-0812">Transmembrane</keyword>
<keyword id="KW-1133">Transmembrane helix</keyword>
<keyword id="KW-0813">Transport</keyword>
<keyword id="KW-0830">Ubiquinone</keyword>
<organism>
    <name type="scientific">Acinetobacter baumannii (strain ATCC 17978 / DSM 105126 / CIP 53.77 / LMG 1025 / NCDC KC755 / 5377)</name>
    <dbReference type="NCBI Taxonomy" id="400667"/>
    <lineage>
        <taxon>Bacteria</taxon>
        <taxon>Pseudomonadati</taxon>
        <taxon>Pseudomonadota</taxon>
        <taxon>Gammaproteobacteria</taxon>
        <taxon>Moraxellales</taxon>
        <taxon>Moraxellaceae</taxon>
        <taxon>Acinetobacter</taxon>
        <taxon>Acinetobacter calcoaceticus/baumannii complex</taxon>
    </lineage>
</organism>
<accession>A3M2P8</accession>
<feature type="chain" id="PRO_0000362613" description="NADH-quinone oxidoreductase subunit A">
    <location>
        <begin position="1"/>
        <end position="183"/>
    </location>
</feature>
<feature type="transmembrane region" description="Helical" evidence="1">
    <location>
        <begin position="11"/>
        <end position="31"/>
    </location>
</feature>
<feature type="transmembrane region" description="Helical" evidence="1">
    <location>
        <begin position="63"/>
        <end position="83"/>
    </location>
</feature>
<feature type="transmembrane region" description="Helical" evidence="1">
    <location>
        <begin position="98"/>
        <end position="118"/>
    </location>
</feature>
<feature type="region of interest" description="Disordered" evidence="2">
    <location>
        <begin position="159"/>
        <end position="183"/>
    </location>
</feature>
<proteinExistence type="inferred from homology"/>
<name>NUOA_ACIBT</name>
<evidence type="ECO:0000255" key="1">
    <source>
        <dbReference type="HAMAP-Rule" id="MF_01394"/>
    </source>
</evidence>
<evidence type="ECO:0000256" key="2">
    <source>
        <dbReference type="SAM" id="MobiDB-lite"/>
    </source>
</evidence>